<proteinExistence type="inferred from homology"/>
<sequence>MQRRIFGIETEFGVTCTFHGQRRLSPDEVARYLFRRVVSWGRSSNVFLRNGSRLYLDVGSHPEYATAECDDLAQLVSHDKAGERILEDLLVDAERRLADEGIGGDIFLFKNNTDSAGNSYGCHENYLVARAGEFSRIADVLLPFLVTRQLICGAGKVLQTPRGAVYCLSQRAEHIWEGVSSATTRSRPIINTRDEPHADAERYRRLHVIVGDSNMSEVTTLLKVGSANLVLEMIEQGVQFRDFSLDNPIRAIREISHDLTGRRTVKLAGGKEASALDIQREYYERAVEHVAKRSPDPMAERVLELWGRTLDAIAAQDLSKIDREIDWAIKHRLLERYQAKHDMDLSNPRIAQLDLAYHDIRRGRGVFDLLQRKGQVERVTDDGEIEAAKDTPPQTTRAKLRGDFIAAAQAAGRDFTVDWVHLKLNDQAQRTVLCKDPFRAVDERVERLIASL</sequence>
<keyword id="KW-0067">ATP-binding</keyword>
<keyword id="KW-0436">Ligase</keyword>
<keyword id="KW-0460">Magnesium</keyword>
<keyword id="KW-0479">Metal-binding</keyword>
<keyword id="KW-0547">Nucleotide-binding</keyword>
<keyword id="KW-1185">Reference proteome</keyword>
<keyword id="KW-0833">Ubl conjugation pathway</keyword>
<evidence type="ECO:0000255" key="1">
    <source>
        <dbReference type="HAMAP-Rule" id="MF_02111"/>
    </source>
</evidence>
<gene>
    <name evidence="1" type="primary">pafA</name>
    <name type="ordered locus">Amir_2247</name>
</gene>
<comment type="function">
    <text evidence="1">Catalyzes the covalent attachment of the prokaryotic ubiquitin-like protein modifier Pup to the proteasomal substrate proteins, thereby targeting them for proteasomal degradation. This tagging system is termed pupylation. The ligation reaction involves the side-chain carboxylate of the C-terminal glutamate of Pup and the side-chain amino group of a substrate lysine.</text>
</comment>
<comment type="catalytic activity">
    <reaction evidence="1">
        <text>ATP + [prokaryotic ubiquitin-like protein]-L-glutamate + [protein]-L-lysine = ADP + phosphate + N(6)-([prokaryotic ubiquitin-like protein]-gamma-L-glutamyl)-[protein]-L-lysine.</text>
        <dbReference type="EC" id="6.3.1.19"/>
    </reaction>
</comment>
<comment type="pathway">
    <text evidence="1">Protein degradation; proteasomal Pup-dependent pathway.</text>
</comment>
<comment type="pathway">
    <text evidence="1">Protein modification; protein pupylation.</text>
</comment>
<comment type="miscellaneous">
    <text evidence="1">The reaction mechanism probably proceeds via the activation of Pup by phosphorylation of its C-terminal glutamate, which is then subject to nucleophilic attack by the substrate lysine, resulting in an isopeptide bond and the release of phosphate as a good leaving group.</text>
</comment>
<comment type="similarity">
    <text evidence="1">Belongs to the Pup ligase/Pup deamidase family. Pup-conjugating enzyme subfamily.</text>
</comment>
<reference key="1">
    <citation type="journal article" date="2009" name="Stand. Genomic Sci.">
        <title>Complete genome sequence of Actinosynnema mirum type strain (101).</title>
        <authorList>
            <person name="Land M."/>
            <person name="Lapidus A."/>
            <person name="Mayilraj S."/>
            <person name="Chen F."/>
            <person name="Copeland A."/>
            <person name="Del Rio T.G."/>
            <person name="Nolan M."/>
            <person name="Lucas S."/>
            <person name="Tice H."/>
            <person name="Cheng J.F."/>
            <person name="Chertkov O."/>
            <person name="Bruce D."/>
            <person name="Goodwin L."/>
            <person name="Pitluck S."/>
            <person name="Rohde M."/>
            <person name="Goker M."/>
            <person name="Pati A."/>
            <person name="Ivanova N."/>
            <person name="Mavromatis K."/>
            <person name="Chen A."/>
            <person name="Palaniappan K."/>
            <person name="Hauser L."/>
            <person name="Chang Y.J."/>
            <person name="Jeffries C.C."/>
            <person name="Brettin T."/>
            <person name="Detter J.C."/>
            <person name="Han C."/>
            <person name="Chain P."/>
            <person name="Tindall B.J."/>
            <person name="Bristow J."/>
            <person name="Eisen J.A."/>
            <person name="Markowitz V."/>
            <person name="Hugenholtz P."/>
            <person name="Kyrpides N.C."/>
            <person name="Klenk H.P."/>
        </authorList>
    </citation>
    <scope>NUCLEOTIDE SEQUENCE [LARGE SCALE GENOMIC DNA]</scope>
    <source>
        <strain>ATCC 29888 / DSM 43827 / JCM 3225 / NBRC 14064 / NCIMB 13271 / NRRL B-12336 / IMRU 3971 / 101</strain>
    </source>
</reference>
<protein>
    <recommendedName>
        <fullName evidence="1">Pup--protein ligase</fullName>
        <ecNumber evidence="1">6.3.1.19</ecNumber>
    </recommendedName>
    <alternativeName>
        <fullName evidence="1">Proteasome accessory factor A</fullName>
    </alternativeName>
    <alternativeName>
        <fullName evidence="1">Pup-conjugating enzyme</fullName>
    </alternativeName>
</protein>
<name>PAFA_ACTMD</name>
<organism>
    <name type="scientific">Actinosynnema mirum (strain ATCC 29888 / DSM 43827 / JCM 3225 / NBRC 14064 / NCIMB 13271 / NRRL B-12336 / IMRU 3971 / 101)</name>
    <dbReference type="NCBI Taxonomy" id="446462"/>
    <lineage>
        <taxon>Bacteria</taxon>
        <taxon>Bacillati</taxon>
        <taxon>Actinomycetota</taxon>
        <taxon>Actinomycetes</taxon>
        <taxon>Pseudonocardiales</taxon>
        <taxon>Pseudonocardiaceae</taxon>
        <taxon>Actinosynnema</taxon>
    </lineage>
</organism>
<dbReference type="EC" id="6.3.1.19" evidence="1"/>
<dbReference type="EMBL" id="CP001630">
    <property type="protein sequence ID" value="ACU36187.1"/>
    <property type="molecule type" value="Genomic_DNA"/>
</dbReference>
<dbReference type="RefSeq" id="WP_015801076.1">
    <property type="nucleotide sequence ID" value="NC_013093.1"/>
</dbReference>
<dbReference type="SMR" id="C6WIE4"/>
<dbReference type="STRING" id="446462.Amir_2247"/>
<dbReference type="MEROPS" id="U72.001"/>
<dbReference type="KEGG" id="ami:Amir_2247"/>
<dbReference type="eggNOG" id="COG0638">
    <property type="taxonomic scope" value="Bacteria"/>
</dbReference>
<dbReference type="HOGENOM" id="CLU_040524_0_1_11"/>
<dbReference type="OrthoDB" id="9760627at2"/>
<dbReference type="UniPathway" id="UPA00997"/>
<dbReference type="UniPathway" id="UPA00998"/>
<dbReference type="Proteomes" id="UP000002213">
    <property type="component" value="Chromosome"/>
</dbReference>
<dbReference type="GO" id="GO:0005524">
    <property type="term" value="F:ATP binding"/>
    <property type="evidence" value="ECO:0007669"/>
    <property type="project" value="UniProtKB-UniRule"/>
</dbReference>
<dbReference type="GO" id="GO:0016879">
    <property type="term" value="F:ligase activity, forming carbon-nitrogen bonds"/>
    <property type="evidence" value="ECO:0007669"/>
    <property type="project" value="InterPro"/>
</dbReference>
<dbReference type="GO" id="GO:0000287">
    <property type="term" value="F:magnesium ion binding"/>
    <property type="evidence" value="ECO:0007669"/>
    <property type="project" value="UniProtKB-UniRule"/>
</dbReference>
<dbReference type="GO" id="GO:0019787">
    <property type="term" value="F:ubiquitin-like protein transferase activity"/>
    <property type="evidence" value="ECO:0007669"/>
    <property type="project" value="UniProtKB-UniRule"/>
</dbReference>
<dbReference type="GO" id="GO:0019941">
    <property type="term" value="P:modification-dependent protein catabolic process"/>
    <property type="evidence" value="ECO:0007669"/>
    <property type="project" value="UniProtKB-UniRule"/>
</dbReference>
<dbReference type="GO" id="GO:0010498">
    <property type="term" value="P:proteasomal protein catabolic process"/>
    <property type="evidence" value="ECO:0007669"/>
    <property type="project" value="UniProtKB-UniRule"/>
</dbReference>
<dbReference type="GO" id="GO:0070490">
    <property type="term" value="P:protein pupylation"/>
    <property type="evidence" value="ECO:0007669"/>
    <property type="project" value="UniProtKB-UniRule"/>
</dbReference>
<dbReference type="HAMAP" id="MF_02111">
    <property type="entry name" value="Pup_ligase"/>
    <property type="match status" value="1"/>
</dbReference>
<dbReference type="InterPro" id="IPR022279">
    <property type="entry name" value="Pup_ligase"/>
</dbReference>
<dbReference type="InterPro" id="IPR004347">
    <property type="entry name" value="Pup_ligase/deamidase"/>
</dbReference>
<dbReference type="NCBIfam" id="TIGR03686">
    <property type="entry name" value="pupylate_PafA"/>
    <property type="match status" value="1"/>
</dbReference>
<dbReference type="PANTHER" id="PTHR42307">
    <property type="entry name" value="PUP DEAMIDASE/DEPUPYLASE"/>
    <property type="match status" value="1"/>
</dbReference>
<dbReference type="PANTHER" id="PTHR42307:SF3">
    <property type="entry name" value="PUP--PROTEIN LIGASE"/>
    <property type="match status" value="1"/>
</dbReference>
<dbReference type="Pfam" id="PF03136">
    <property type="entry name" value="Pup_ligase"/>
    <property type="match status" value="1"/>
</dbReference>
<dbReference type="PIRSF" id="PIRSF018077">
    <property type="entry name" value="UCP018077"/>
    <property type="match status" value="1"/>
</dbReference>
<accession>C6WIE4</accession>
<feature type="chain" id="PRO_0000395891" description="Pup--protein ligase">
    <location>
        <begin position="1"/>
        <end position="452"/>
    </location>
</feature>
<feature type="active site" description="Proton acceptor" evidence="1">
    <location>
        <position position="57"/>
    </location>
</feature>
<feature type="binding site" evidence="1">
    <location>
        <position position="9"/>
    </location>
    <ligand>
        <name>Mg(2+)</name>
        <dbReference type="ChEBI" id="CHEBI:18420"/>
    </ligand>
</feature>
<feature type="binding site" evidence="1">
    <location>
        <position position="53"/>
    </location>
    <ligand>
        <name>ATP</name>
        <dbReference type="ChEBI" id="CHEBI:30616"/>
    </ligand>
</feature>
<feature type="binding site" evidence="1">
    <location>
        <position position="55"/>
    </location>
    <ligand>
        <name>Mg(2+)</name>
        <dbReference type="ChEBI" id="CHEBI:18420"/>
    </ligand>
</feature>
<feature type="binding site" evidence="1">
    <location>
        <position position="63"/>
    </location>
    <ligand>
        <name>Mg(2+)</name>
        <dbReference type="ChEBI" id="CHEBI:18420"/>
    </ligand>
</feature>
<feature type="binding site" evidence="1">
    <location>
        <position position="66"/>
    </location>
    <ligand>
        <name>ATP</name>
        <dbReference type="ChEBI" id="CHEBI:30616"/>
    </ligand>
</feature>
<feature type="binding site" evidence="1">
    <location>
        <position position="419"/>
    </location>
    <ligand>
        <name>ATP</name>
        <dbReference type="ChEBI" id="CHEBI:30616"/>
    </ligand>
</feature>